<reference key="1">
    <citation type="submission" date="2008-08" db="EMBL/GenBank/DDBJ databases">
        <title>Complete sequence of Acidithiobacillus ferrooxidans ATCC 53993.</title>
        <authorList>
            <person name="Lucas S."/>
            <person name="Copeland A."/>
            <person name="Lapidus A."/>
            <person name="Glavina del Rio T."/>
            <person name="Dalin E."/>
            <person name="Tice H."/>
            <person name="Bruce D."/>
            <person name="Goodwin L."/>
            <person name="Pitluck S."/>
            <person name="Sims D."/>
            <person name="Brettin T."/>
            <person name="Detter J.C."/>
            <person name="Han C."/>
            <person name="Kuske C.R."/>
            <person name="Larimer F."/>
            <person name="Land M."/>
            <person name="Hauser L."/>
            <person name="Kyrpides N."/>
            <person name="Lykidis A."/>
            <person name="Borole A.P."/>
        </authorList>
    </citation>
    <scope>NUCLEOTIDE SEQUENCE [LARGE SCALE GENOMIC DNA]</scope>
    <source>
        <strain>ATCC 53993 / BNL-5-31</strain>
    </source>
</reference>
<accession>B5EJ91</accession>
<organism>
    <name type="scientific">Acidithiobacillus ferrooxidans (strain ATCC 53993 / BNL-5-31)</name>
    <name type="common">Leptospirillum ferrooxidans (ATCC 53993)</name>
    <dbReference type="NCBI Taxonomy" id="380394"/>
    <lineage>
        <taxon>Bacteria</taxon>
        <taxon>Pseudomonadati</taxon>
        <taxon>Pseudomonadota</taxon>
        <taxon>Acidithiobacillia</taxon>
        <taxon>Acidithiobacillales</taxon>
        <taxon>Acidithiobacillaceae</taxon>
        <taxon>Acidithiobacillus</taxon>
    </lineage>
</organism>
<comment type="function">
    <text evidence="1">Represses a number of genes involved in the response to DNA damage (SOS response), including recA and lexA. In the presence of single-stranded DNA, RecA interacts with LexA causing an autocatalytic cleavage which disrupts the DNA-binding part of LexA, leading to derepression of the SOS regulon and eventually DNA repair.</text>
</comment>
<comment type="catalytic activity">
    <reaction evidence="1">
        <text>Hydrolysis of Ala-|-Gly bond in repressor LexA.</text>
        <dbReference type="EC" id="3.4.21.88"/>
    </reaction>
</comment>
<comment type="subunit">
    <text evidence="1">Homodimer.</text>
</comment>
<comment type="similarity">
    <text evidence="1">Belongs to the peptidase S24 family.</text>
</comment>
<name>LEXA_ACIF5</name>
<feature type="chain" id="PRO_1000089539" description="LexA repressor">
    <location>
        <begin position="1"/>
        <end position="205"/>
    </location>
</feature>
<feature type="DNA-binding region" description="H-T-H motif" evidence="1">
    <location>
        <begin position="28"/>
        <end position="48"/>
    </location>
</feature>
<feature type="active site" description="For autocatalytic cleavage activity" evidence="1">
    <location>
        <position position="120"/>
    </location>
</feature>
<feature type="active site" description="For autocatalytic cleavage activity" evidence="1">
    <location>
        <position position="159"/>
    </location>
</feature>
<feature type="site" description="Cleavage; by autolysis" evidence="1">
    <location>
        <begin position="85"/>
        <end position="86"/>
    </location>
</feature>
<protein>
    <recommendedName>
        <fullName evidence="1">LexA repressor</fullName>
        <ecNumber evidence="1">3.4.21.88</ecNumber>
    </recommendedName>
</protein>
<proteinExistence type="inferred from homology"/>
<gene>
    <name evidence="1" type="primary">lexA</name>
    <name type="ordered locus">Lferr_1543</name>
</gene>
<dbReference type="EC" id="3.4.21.88" evidence="1"/>
<dbReference type="EMBL" id="CP001132">
    <property type="protein sequence ID" value="ACH83765.1"/>
    <property type="molecule type" value="Genomic_DNA"/>
</dbReference>
<dbReference type="RefSeq" id="WP_009568876.1">
    <property type="nucleotide sequence ID" value="NC_011206.1"/>
</dbReference>
<dbReference type="SMR" id="B5EJ91"/>
<dbReference type="MEROPS" id="S24.001"/>
<dbReference type="GeneID" id="65281024"/>
<dbReference type="KEGG" id="afe:Lferr_1543"/>
<dbReference type="eggNOG" id="COG1974">
    <property type="taxonomic scope" value="Bacteria"/>
</dbReference>
<dbReference type="HOGENOM" id="CLU_066192_45_3_6"/>
<dbReference type="GO" id="GO:0003677">
    <property type="term" value="F:DNA binding"/>
    <property type="evidence" value="ECO:0007669"/>
    <property type="project" value="UniProtKB-UniRule"/>
</dbReference>
<dbReference type="GO" id="GO:0004252">
    <property type="term" value="F:serine-type endopeptidase activity"/>
    <property type="evidence" value="ECO:0007669"/>
    <property type="project" value="UniProtKB-UniRule"/>
</dbReference>
<dbReference type="GO" id="GO:0006281">
    <property type="term" value="P:DNA repair"/>
    <property type="evidence" value="ECO:0007669"/>
    <property type="project" value="UniProtKB-UniRule"/>
</dbReference>
<dbReference type="GO" id="GO:0006260">
    <property type="term" value="P:DNA replication"/>
    <property type="evidence" value="ECO:0007669"/>
    <property type="project" value="UniProtKB-UniRule"/>
</dbReference>
<dbReference type="GO" id="GO:0045892">
    <property type="term" value="P:negative regulation of DNA-templated transcription"/>
    <property type="evidence" value="ECO:0007669"/>
    <property type="project" value="UniProtKB-UniRule"/>
</dbReference>
<dbReference type="GO" id="GO:0006508">
    <property type="term" value="P:proteolysis"/>
    <property type="evidence" value="ECO:0007669"/>
    <property type="project" value="InterPro"/>
</dbReference>
<dbReference type="GO" id="GO:0009432">
    <property type="term" value="P:SOS response"/>
    <property type="evidence" value="ECO:0007669"/>
    <property type="project" value="UniProtKB-UniRule"/>
</dbReference>
<dbReference type="CDD" id="cd06529">
    <property type="entry name" value="S24_LexA-like"/>
    <property type="match status" value="1"/>
</dbReference>
<dbReference type="FunFam" id="1.10.10.10:FF:000009">
    <property type="entry name" value="LexA repressor"/>
    <property type="match status" value="1"/>
</dbReference>
<dbReference type="FunFam" id="2.10.109.10:FF:000001">
    <property type="entry name" value="LexA repressor"/>
    <property type="match status" value="1"/>
</dbReference>
<dbReference type="Gene3D" id="2.10.109.10">
    <property type="entry name" value="Umud Fragment, subunit A"/>
    <property type="match status" value="1"/>
</dbReference>
<dbReference type="Gene3D" id="1.10.10.10">
    <property type="entry name" value="Winged helix-like DNA-binding domain superfamily/Winged helix DNA-binding domain"/>
    <property type="match status" value="1"/>
</dbReference>
<dbReference type="HAMAP" id="MF_00015">
    <property type="entry name" value="LexA"/>
    <property type="match status" value="1"/>
</dbReference>
<dbReference type="InterPro" id="IPR006200">
    <property type="entry name" value="LexA"/>
</dbReference>
<dbReference type="InterPro" id="IPR039418">
    <property type="entry name" value="LexA-like"/>
</dbReference>
<dbReference type="InterPro" id="IPR036286">
    <property type="entry name" value="LexA/Signal_pep-like_sf"/>
</dbReference>
<dbReference type="InterPro" id="IPR006199">
    <property type="entry name" value="LexA_DNA-bd_dom"/>
</dbReference>
<dbReference type="InterPro" id="IPR050077">
    <property type="entry name" value="LexA_repressor"/>
</dbReference>
<dbReference type="InterPro" id="IPR006197">
    <property type="entry name" value="Peptidase_S24_LexA"/>
</dbReference>
<dbReference type="InterPro" id="IPR015927">
    <property type="entry name" value="Peptidase_S24_S26A/B/C"/>
</dbReference>
<dbReference type="InterPro" id="IPR036388">
    <property type="entry name" value="WH-like_DNA-bd_sf"/>
</dbReference>
<dbReference type="InterPro" id="IPR036390">
    <property type="entry name" value="WH_DNA-bd_sf"/>
</dbReference>
<dbReference type="NCBIfam" id="TIGR00498">
    <property type="entry name" value="lexA"/>
    <property type="match status" value="1"/>
</dbReference>
<dbReference type="PANTHER" id="PTHR33516">
    <property type="entry name" value="LEXA REPRESSOR"/>
    <property type="match status" value="1"/>
</dbReference>
<dbReference type="PANTHER" id="PTHR33516:SF2">
    <property type="entry name" value="LEXA REPRESSOR-RELATED"/>
    <property type="match status" value="1"/>
</dbReference>
<dbReference type="Pfam" id="PF01726">
    <property type="entry name" value="LexA_DNA_bind"/>
    <property type="match status" value="1"/>
</dbReference>
<dbReference type="Pfam" id="PF00717">
    <property type="entry name" value="Peptidase_S24"/>
    <property type="match status" value="1"/>
</dbReference>
<dbReference type="PRINTS" id="PR00726">
    <property type="entry name" value="LEXASERPTASE"/>
</dbReference>
<dbReference type="SUPFAM" id="SSF51306">
    <property type="entry name" value="LexA/Signal peptidase"/>
    <property type="match status" value="1"/>
</dbReference>
<dbReference type="SUPFAM" id="SSF46785">
    <property type="entry name" value="Winged helix' DNA-binding domain"/>
    <property type="match status" value="1"/>
</dbReference>
<sequence length="205" mass="22626">MDELTPRQSEILAWIRARMAEDSLPPTRAELMRAFDFRSPNAAESHLRVLARKGYILLQSGTARGIRLCASEEETGLPLIGRVAAGQPMLAEEFREGQLPVDPKLFSPGADYLLRVQGMSMRDAGILDGDILAVRHDASLTLQDGQMVVARVNGEVTVKRWKRDGKQVWLLPENPDFSPISVDLQRDSLTIEGVVVGLLRIGGNL</sequence>
<keyword id="KW-0068">Autocatalytic cleavage</keyword>
<keyword id="KW-0227">DNA damage</keyword>
<keyword id="KW-0234">DNA repair</keyword>
<keyword id="KW-0235">DNA replication</keyword>
<keyword id="KW-0238">DNA-binding</keyword>
<keyword id="KW-0378">Hydrolase</keyword>
<keyword id="KW-0678">Repressor</keyword>
<keyword id="KW-0742">SOS response</keyword>
<keyword id="KW-0804">Transcription</keyword>
<keyword id="KW-0805">Transcription regulation</keyword>
<evidence type="ECO:0000255" key="1">
    <source>
        <dbReference type="HAMAP-Rule" id="MF_00015"/>
    </source>
</evidence>